<accession>O70255</accession>
<proteinExistence type="evidence at protein level"/>
<sequence length="215" mass="24162">MYGKSPALVLPLLLSLQLTALCPTEAVEIYTSGALEAVNGTDVRLKCTFSSFAPVGDALTVTWNFRPRDGGREQFVFYYHMDPFRPMSGRFKDRVVWDGNPERYDVSILLWKLQFDDNGTYTCQVKNPPDVDGLVGTIRLSVVHTVPFSEIYFLAVAIGSACALMIIVVIVVVLFQHFRKKRWADRADKAEGTKSKEEEKLNQGNKVSVFVEDTD</sequence>
<keyword id="KW-0130">Cell adhesion</keyword>
<keyword id="KW-1015">Disulfide bond</keyword>
<keyword id="KW-0325">Glycoprotein</keyword>
<keyword id="KW-0393">Immunoglobulin domain</keyword>
<keyword id="KW-0472">Membrane</keyword>
<keyword id="KW-1185">Reference proteome</keyword>
<keyword id="KW-0732">Signal</keyword>
<keyword id="KW-0812">Transmembrane</keyword>
<keyword id="KW-1133">Transmembrane helix</keyword>
<name>MPZL2_MOUSE</name>
<dbReference type="EMBL" id="AF030454">
    <property type="protein sequence ID" value="AAC40128.1"/>
    <property type="molecule type" value="mRNA"/>
</dbReference>
<dbReference type="CCDS" id="CCDS23126.1"/>
<dbReference type="SMR" id="O70255"/>
<dbReference type="FunCoup" id="O70255">
    <property type="interactions" value="1530"/>
</dbReference>
<dbReference type="IntAct" id="O70255">
    <property type="interactions" value="1"/>
</dbReference>
<dbReference type="STRING" id="10090.ENSMUSP00000034600"/>
<dbReference type="GlyCosmos" id="O70255">
    <property type="glycosylation" value="2 sites, No reported glycans"/>
</dbReference>
<dbReference type="GlyGen" id="O70255">
    <property type="glycosylation" value="2 sites, 1 N-linked glycan (1 site)"/>
</dbReference>
<dbReference type="iPTMnet" id="O70255"/>
<dbReference type="PhosphoSitePlus" id="O70255"/>
<dbReference type="jPOST" id="O70255"/>
<dbReference type="PaxDb" id="10090-ENSMUSP00000034600"/>
<dbReference type="ProteomicsDB" id="252613"/>
<dbReference type="AGR" id="MGI:1289160"/>
<dbReference type="MGI" id="MGI:1289160">
    <property type="gene designation" value="Mpzl2"/>
</dbReference>
<dbReference type="eggNOG" id="ENOG502RYWU">
    <property type="taxonomic scope" value="Eukaryota"/>
</dbReference>
<dbReference type="InParanoid" id="O70255"/>
<dbReference type="PhylomeDB" id="O70255"/>
<dbReference type="ChiTaRS" id="Mpzl2">
    <property type="organism name" value="mouse"/>
</dbReference>
<dbReference type="PRO" id="PR:O70255"/>
<dbReference type="Proteomes" id="UP000000589">
    <property type="component" value="Unplaced"/>
</dbReference>
<dbReference type="RNAct" id="O70255">
    <property type="molecule type" value="protein"/>
</dbReference>
<dbReference type="GO" id="GO:0005886">
    <property type="term" value="C:plasma membrane"/>
    <property type="evidence" value="ECO:0000314"/>
    <property type="project" value="MGI"/>
</dbReference>
<dbReference type="GO" id="GO:0098609">
    <property type="term" value="P:cell-cell adhesion"/>
    <property type="evidence" value="ECO:0000314"/>
    <property type="project" value="MGI"/>
</dbReference>
<dbReference type="GO" id="GO:0033077">
    <property type="term" value="P:T cell differentiation in thymus"/>
    <property type="evidence" value="ECO:0000315"/>
    <property type="project" value="MGI"/>
</dbReference>
<dbReference type="CDD" id="cd05880">
    <property type="entry name" value="IgV_EVA1"/>
    <property type="match status" value="1"/>
</dbReference>
<dbReference type="FunFam" id="2.60.40.10:FF:000193">
    <property type="entry name" value="Myelin protein zero-like 1 like"/>
    <property type="match status" value="1"/>
</dbReference>
<dbReference type="Gene3D" id="2.60.40.10">
    <property type="entry name" value="Immunoglobulins"/>
    <property type="match status" value="1"/>
</dbReference>
<dbReference type="InterPro" id="IPR007110">
    <property type="entry name" value="Ig-like_dom"/>
</dbReference>
<dbReference type="InterPro" id="IPR036179">
    <property type="entry name" value="Ig-like_dom_sf"/>
</dbReference>
<dbReference type="InterPro" id="IPR013783">
    <property type="entry name" value="Ig-like_fold"/>
</dbReference>
<dbReference type="InterPro" id="IPR003599">
    <property type="entry name" value="Ig_sub"/>
</dbReference>
<dbReference type="InterPro" id="IPR013106">
    <property type="entry name" value="Ig_V-set"/>
</dbReference>
<dbReference type="InterPro" id="IPR029863">
    <property type="entry name" value="MPZL2_Ig-like_dom"/>
</dbReference>
<dbReference type="InterPro" id="IPR000920">
    <property type="entry name" value="Myelin_P0-rel"/>
</dbReference>
<dbReference type="PANTHER" id="PTHR13869">
    <property type="entry name" value="MYELIN P0 RELATED"/>
    <property type="match status" value="1"/>
</dbReference>
<dbReference type="PANTHER" id="PTHR13869:SF21">
    <property type="entry name" value="MYELIN PROTEIN ZERO-LIKE PROTEIN 2"/>
    <property type="match status" value="1"/>
</dbReference>
<dbReference type="Pfam" id="PF07686">
    <property type="entry name" value="V-set"/>
    <property type="match status" value="1"/>
</dbReference>
<dbReference type="PRINTS" id="PR00213">
    <property type="entry name" value="MYELINP0"/>
</dbReference>
<dbReference type="SMART" id="SM00409">
    <property type="entry name" value="IG"/>
    <property type="match status" value="1"/>
</dbReference>
<dbReference type="SMART" id="SM00406">
    <property type="entry name" value="IGv"/>
    <property type="match status" value="1"/>
</dbReference>
<dbReference type="SUPFAM" id="SSF48726">
    <property type="entry name" value="Immunoglobulin"/>
    <property type="match status" value="1"/>
</dbReference>
<dbReference type="PROSITE" id="PS50835">
    <property type="entry name" value="IG_LIKE"/>
    <property type="match status" value="1"/>
</dbReference>
<comment type="function">
    <text>Mediates homophilic cell-cell adhesion.</text>
</comment>
<comment type="subcellular location">
    <subcellularLocation>
        <location evidence="9">Membrane</location>
        <topology evidence="9">Single-pass type I membrane protein</topology>
    </subcellularLocation>
</comment>
<comment type="tissue specificity">
    <text evidence="5 6 7">Widely expressed (PubMed:29982980, PubMed:9585423). Expressed in the cochlea, in Deiters' cells, possibly at contact sites with the basilar membrane (PubMed:29961571, PubMed:29982980). Expressed in both outer and inner auditory hair cells (PubMed:29961571, PubMed:29982980). In the stria vascularis, detected in the basal cell layer (PubMed:29961571). Not detected in thymocytes, lymphocytes, macrophage or dendritic cells (PubMed:9585423).</text>
</comment>
<comment type="disruption phenotype">
    <text evidence="5">Mutant mice display early-onset progressive sensorineural hearing impairment that is more pronounced in the high frequencies. They show an altered organization of outer hair cells and supporting cells and degeneration of the organ of Corti, accompanied by mild degeneration of spiral ganglion neurons, that is most pronounced at the cochlear base.</text>
</comment>
<comment type="similarity">
    <text evidence="9">Belongs to the myelin P0 protein family.</text>
</comment>
<evidence type="ECO:0000255" key="1"/>
<evidence type="ECO:0000255" key="2">
    <source>
        <dbReference type="PROSITE-ProRule" id="PRU00114"/>
    </source>
</evidence>
<evidence type="ECO:0000256" key="3">
    <source>
        <dbReference type="SAM" id="MobiDB-lite"/>
    </source>
</evidence>
<evidence type="ECO:0000269" key="4">
    <source>
    </source>
</evidence>
<evidence type="ECO:0000269" key="5">
    <source>
    </source>
</evidence>
<evidence type="ECO:0000269" key="6">
    <source>
    </source>
</evidence>
<evidence type="ECO:0000269" key="7">
    <source>
    </source>
</evidence>
<evidence type="ECO:0000303" key="8">
    <source>
    </source>
</evidence>
<evidence type="ECO:0000305" key="9"/>
<organism>
    <name type="scientific">Mus musculus</name>
    <name type="common">Mouse</name>
    <dbReference type="NCBI Taxonomy" id="10090"/>
    <lineage>
        <taxon>Eukaryota</taxon>
        <taxon>Metazoa</taxon>
        <taxon>Chordata</taxon>
        <taxon>Craniata</taxon>
        <taxon>Vertebrata</taxon>
        <taxon>Euteleostomi</taxon>
        <taxon>Mammalia</taxon>
        <taxon>Eutheria</taxon>
        <taxon>Euarchontoglires</taxon>
        <taxon>Glires</taxon>
        <taxon>Rodentia</taxon>
        <taxon>Myomorpha</taxon>
        <taxon>Muroidea</taxon>
        <taxon>Muridae</taxon>
        <taxon>Murinae</taxon>
        <taxon>Mus</taxon>
        <taxon>Mus</taxon>
    </lineage>
</organism>
<feature type="signal peptide" evidence="1">
    <location>
        <begin position="1"/>
        <end position="26"/>
    </location>
</feature>
<feature type="chain" id="PRO_0000014757" description="Myelin protein zero-like protein 2">
    <location>
        <begin position="27"/>
        <end position="215"/>
    </location>
</feature>
<feature type="topological domain" description="Extracellular" evidence="1">
    <location>
        <begin position="27"/>
        <end position="154"/>
    </location>
</feature>
<feature type="transmembrane region" description="Helical" evidence="1">
    <location>
        <begin position="155"/>
        <end position="175"/>
    </location>
</feature>
<feature type="topological domain" description="Cytoplasmic" evidence="1">
    <location>
        <begin position="176"/>
        <end position="215"/>
    </location>
</feature>
<feature type="domain" description="Ig-like V-type">
    <location>
        <begin position="27"/>
        <end position="141"/>
    </location>
</feature>
<feature type="region of interest" description="Disordered" evidence="3">
    <location>
        <begin position="187"/>
        <end position="215"/>
    </location>
</feature>
<feature type="compositionally biased region" description="Basic and acidic residues" evidence="3">
    <location>
        <begin position="187"/>
        <end position="201"/>
    </location>
</feature>
<feature type="glycosylation site" description="N-linked (GlcNAc...) asparagine" evidence="4">
    <location>
        <position position="39"/>
    </location>
</feature>
<feature type="glycosylation site" description="N-linked (GlcNAc...) asparagine" evidence="1">
    <location>
        <position position="118"/>
    </location>
</feature>
<feature type="disulfide bond" evidence="2">
    <location>
        <begin position="47"/>
        <end position="123"/>
    </location>
</feature>
<gene>
    <name type="primary">Mpzl2</name>
    <name evidence="8" type="synonym">Eva</name>
    <name type="synonym">Eva1</name>
</gene>
<reference key="1">
    <citation type="journal article" date="1998" name="J. Cell Biol.">
        <title>Epithelial V-like antigen (EVA), a novel member of the immunoglobulin superfamily, expressed in embryonic epithelia with a potential role as homotypic adhesion molecule in thymus histogenesis.</title>
        <authorList>
            <person name="Guttinger M."/>
            <person name="Sutti F."/>
            <person name="Panigada M."/>
            <person name="Porcellini S."/>
            <person name="Merati B."/>
            <person name="Mariani M."/>
            <person name="Teesalu T."/>
            <person name="Consalez G.G."/>
            <person name="Grassi F."/>
        </authorList>
    </citation>
    <scope>NUCLEOTIDE SEQUENCE [MRNA]</scope>
    <scope>TISSUE SPECIFICITY</scope>
    <source>
        <tissue>Thymus</tissue>
    </source>
</reference>
<reference key="2">
    <citation type="journal article" date="2009" name="Nat. Biotechnol.">
        <title>Mass-spectrometric identification and relative quantification of N-linked cell surface glycoproteins.</title>
        <authorList>
            <person name="Wollscheid B."/>
            <person name="Bausch-Fluck D."/>
            <person name="Henderson C."/>
            <person name="O'Brien R."/>
            <person name="Bibel M."/>
            <person name="Schiess R."/>
            <person name="Aebersold R."/>
            <person name="Watts J.D."/>
        </authorList>
    </citation>
    <scope>GLYCOSYLATION [LARGE SCALE ANALYSIS] AT ASN-39</scope>
</reference>
<reference key="3">
    <citation type="journal article" date="2018" name="Am. J. Hum. Genet.">
        <title>MPZL2, encoding the epithelial junctional protein myelin protein zero-like 2, is essential for hearing in man and mouse.</title>
        <authorList>
            <person name="Wesdorp M."/>
            <person name="Murillo-Cuesta S."/>
            <person name="Peters T."/>
            <person name="Celaya A.M."/>
            <person name="Oonk A."/>
            <person name="Schraders M."/>
            <person name="Oostrik J."/>
            <person name="Gomez-Rosas E."/>
            <person name="Beynon A.J."/>
            <person name="Hartel B.P."/>
            <person name="Okkersen K."/>
            <person name="Koenen H.J.P.M."/>
            <person name="Weeda J."/>
            <person name="Lelieveld S."/>
            <person name="Voermans N.C."/>
            <person name="Joosten I."/>
            <person name="Hoyng C.B."/>
            <person name="Lichtner P."/>
            <person name="Kunst H.P.M."/>
            <person name="Feenstra I."/>
            <person name="de Bruijn S.E."/>
            <person name="Admiraal R.J.C."/>
            <person name="Yntema H.G."/>
            <person name="van Wijk E."/>
            <person name="Del Castillo I."/>
            <person name="Serra P."/>
            <person name="Varela-Nieto I."/>
            <person name="Pennings R.J.E."/>
            <person name="Kremer H."/>
        </authorList>
    </citation>
    <scope>DISRUPTION PHENOTYPE</scope>
    <scope>TISSUE SPECIFICITY</scope>
</reference>
<reference key="4">
    <citation type="journal article" date="2018" name="Hum. Genet.">
        <title>MPZL2 is a novel gene associated with autosomal recessive nonsyndromic moderate hearing loss.</title>
        <authorList>
            <person name="Bademci G."/>
            <person name="Abad C."/>
            <person name="Incesulu A."/>
            <person name="Rad A."/>
            <person name="Alper O."/>
            <person name="Kolb S.M."/>
            <person name="Cengiz F.B."/>
            <person name="Diaz-Horta O."/>
            <person name="Silan F."/>
            <person name="Mihci E."/>
            <person name="Ocak E."/>
            <person name="Najafi M."/>
            <person name="Maroofian R."/>
            <person name="Yilmaz E."/>
            <person name="Nur B.G."/>
            <person name="Duman D."/>
            <person name="Guo S."/>
            <person name="Sant D.W."/>
            <person name="Wang G."/>
            <person name="Monje P.V."/>
            <person name="Haaf T."/>
            <person name="Blanton S.H."/>
            <person name="Vona B."/>
            <person name="Walz K."/>
            <person name="Tekin M."/>
        </authorList>
    </citation>
    <scope>TISSUE SPECIFICITY</scope>
</reference>
<protein>
    <recommendedName>
        <fullName>Myelin protein zero-like protein 2</fullName>
    </recommendedName>
    <alternativeName>
        <fullName>Epithelial V-like antigen 1</fullName>
    </alternativeName>
</protein>